<reference key="1">
    <citation type="journal article" date="2001" name="Science">
        <title>Comparative genomics of Listeria species.</title>
        <authorList>
            <person name="Glaser P."/>
            <person name="Frangeul L."/>
            <person name="Buchrieser C."/>
            <person name="Rusniok C."/>
            <person name="Amend A."/>
            <person name="Baquero F."/>
            <person name="Berche P."/>
            <person name="Bloecker H."/>
            <person name="Brandt P."/>
            <person name="Chakraborty T."/>
            <person name="Charbit A."/>
            <person name="Chetouani F."/>
            <person name="Couve E."/>
            <person name="de Daruvar A."/>
            <person name="Dehoux P."/>
            <person name="Domann E."/>
            <person name="Dominguez-Bernal G."/>
            <person name="Duchaud E."/>
            <person name="Durant L."/>
            <person name="Dussurget O."/>
            <person name="Entian K.-D."/>
            <person name="Fsihi H."/>
            <person name="Garcia-del Portillo F."/>
            <person name="Garrido P."/>
            <person name="Gautier L."/>
            <person name="Goebel W."/>
            <person name="Gomez-Lopez N."/>
            <person name="Hain T."/>
            <person name="Hauf J."/>
            <person name="Jackson D."/>
            <person name="Jones L.-M."/>
            <person name="Kaerst U."/>
            <person name="Kreft J."/>
            <person name="Kuhn M."/>
            <person name="Kunst F."/>
            <person name="Kurapkat G."/>
            <person name="Madueno E."/>
            <person name="Maitournam A."/>
            <person name="Mata Vicente J."/>
            <person name="Ng E."/>
            <person name="Nedjari H."/>
            <person name="Nordsiek G."/>
            <person name="Novella S."/>
            <person name="de Pablos B."/>
            <person name="Perez-Diaz J.-C."/>
            <person name="Purcell R."/>
            <person name="Remmel B."/>
            <person name="Rose M."/>
            <person name="Schlueter T."/>
            <person name="Simoes N."/>
            <person name="Tierrez A."/>
            <person name="Vazquez-Boland J.-A."/>
            <person name="Voss H."/>
            <person name="Wehland J."/>
            <person name="Cossart P."/>
        </authorList>
    </citation>
    <scope>NUCLEOTIDE SEQUENCE [LARGE SCALE GENOMIC DNA]</scope>
    <source>
        <strain>ATCC BAA-680 / CLIP 11262</strain>
    </source>
</reference>
<feature type="chain" id="PRO_0000092025" description="Energy-coupling factor transporter ATP-binding protein EcfA2">
    <location>
        <begin position="1"/>
        <end position="288"/>
    </location>
</feature>
<feature type="domain" description="ABC transporter" evidence="1">
    <location>
        <begin position="3"/>
        <end position="246"/>
    </location>
</feature>
<feature type="binding site" evidence="1">
    <location>
        <begin position="40"/>
        <end position="47"/>
    </location>
    <ligand>
        <name>ATP</name>
        <dbReference type="ChEBI" id="CHEBI:30616"/>
    </ligand>
</feature>
<dbReference type="EC" id="7.-.-.-" evidence="1"/>
<dbReference type="EMBL" id="AL596173">
    <property type="protein sequence ID" value="CAC97975.1"/>
    <property type="molecule type" value="Genomic_DNA"/>
</dbReference>
<dbReference type="PIR" id="AG1775">
    <property type="entry name" value="AG1775"/>
</dbReference>
<dbReference type="RefSeq" id="WP_003764109.1">
    <property type="nucleotide sequence ID" value="NC_003212.1"/>
</dbReference>
<dbReference type="SMR" id="Q927N9"/>
<dbReference type="STRING" id="272626.gene:17567136"/>
<dbReference type="GeneID" id="93236022"/>
<dbReference type="KEGG" id="lin:lin2749"/>
<dbReference type="eggNOG" id="COG1122">
    <property type="taxonomic scope" value="Bacteria"/>
</dbReference>
<dbReference type="HOGENOM" id="CLU_000604_1_22_9"/>
<dbReference type="OrthoDB" id="9784332at2"/>
<dbReference type="Proteomes" id="UP000002513">
    <property type="component" value="Chromosome"/>
</dbReference>
<dbReference type="GO" id="GO:0043190">
    <property type="term" value="C:ATP-binding cassette (ABC) transporter complex"/>
    <property type="evidence" value="ECO:0007669"/>
    <property type="project" value="TreeGrafter"/>
</dbReference>
<dbReference type="GO" id="GO:0005524">
    <property type="term" value="F:ATP binding"/>
    <property type="evidence" value="ECO:0007669"/>
    <property type="project" value="UniProtKB-KW"/>
</dbReference>
<dbReference type="GO" id="GO:0016887">
    <property type="term" value="F:ATP hydrolysis activity"/>
    <property type="evidence" value="ECO:0007669"/>
    <property type="project" value="InterPro"/>
</dbReference>
<dbReference type="GO" id="GO:0042626">
    <property type="term" value="F:ATPase-coupled transmembrane transporter activity"/>
    <property type="evidence" value="ECO:0007669"/>
    <property type="project" value="TreeGrafter"/>
</dbReference>
<dbReference type="CDD" id="cd03225">
    <property type="entry name" value="ABC_cobalt_CbiO_domain1"/>
    <property type="match status" value="1"/>
</dbReference>
<dbReference type="FunFam" id="3.40.50.300:FF:000224">
    <property type="entry name" value="Energy-coupling factor transporter ATP-binding protein EcfA"/>
    <property type="match status" value="1"/>
</dbReference>
<dbReference type="Gene3D" id="3.40.50.300">
    <property type="entry name" value="P-loop containing nucleotide triphosphate hydrolases"/>
    <property type="match status" value="1"/>
</dbReference>
<dbReference type="InterPro" id="IPR003593">
    <property type="entry name" value="AAA+_ATPase"/>
</dbReference>
<dbReference type="InterPro" id="IPR003439">
    <property type="entry name" value="ABC_transporter-like_ATP-bd"/>
</dbReference>
<dbReference type="InterPro" id="IPR017871">
    <property type="entry name" value="ABC_transporter-like_CS"/>
</dbReference>
<dbReference type="InterPro" id="IPR015856">
    <property type="entry name" value="ABC_transpr_CbiO/EcfA_su"/>
</dbReference>
<dbReference type="InterPro" id="IPR050095">
    <property type="entry name" value="ECF_ABC_transporter_ATP-bd"/>
</dbReference>
<dbReference type="InterPro" id="IPR030946">
    <property type="entry name" value="EcfA2"/>
</dbReference>
<dbReference type="InterPro" id="IPR027417">
    <property type="entry name" value="P-loop_NTPase"/>
</dbReference>
<dbReference type="NCBIfam" id="TIGR04521">
    <property type="entry name" value="ECF_ATPase_2"/>
    <property type="match status" value="1"/>
</dbReference>
<dbReference type="NCBIfam" id="NF010155">
    <property type="entry name" value="PRK13634.1"/>
    <property type="match status" value="1"/>
</dbReference>
<dbReference type="PANTHER" id="PTHR43553:SF27">
    <property type="entry name" value="ENERGY-COUPLING FACTOR TRANSPORTER ATP-BINDING PROTEIN ECFA2"/>
    <property type="match status" value="1"/>
</dbReference>
<dbReference type="PANTHER" id="PTHR43553">
    <property type="entry name" value="HEAVY METAL TRANSPORTER"/>
    <property type="match status" value="1"/>
</dbReference>
<dbReference type="Pfam" id="PF00005">
    <property type="entry name" value="ABC_tran"/>
    <property type="match status" value="1"/>
</dbReference>
<dbReference type="SMART" id="SM00382">
    <property type="entry name" value="AAA"/>
    <property type="match status" value="1"/>
</dbReference>
<dbReference type="SUPFAM" id="SSF52540">
    <property type="entry name" value="P-loop containing nucleoside triphosphate hydrolases"/>
    <property type="match status" value="1"/>
</dbReference>
<dbReference type="PROSITE" id="PS00211">
    <property type="entry name" value="ABC_TRANSPORTER_1"/>
    <property type="match status" value="1"/>
</dbReference>
<dbReference type="PROSITE" id="PS50893">
    <property type="entry name" value="ABC_TRANSPORTER_2"/>
    <property type="match status" value="1"/>
</dbReference>
<dbReference type="PROSITE" id="PS51246">
    <property type="entry name" value="CBIO"/>
    <property type="match status" value="1"/>
</dbReference>
<organism>
    <name type="scientific">Listeria innocua serovar 6a (strain ATCC BAA-680 / CLIP 11262)</name>
    <dbReference type="NCBI Taxonomy" id="272626"/>
    <lineage>
        <taxon>Bacteria</taxon>
        <taxon>Bacillati</taxon>
        <taxon>Bacillota</taxon>
        <taxon>Bacilli</taxon>
        <taxon>Bacillales</taxon>
        <taxon>Listeriaceae</taxon>
        <taxon>Listeria</taxon>
    </lineage>
</organism>
<keyword id="KW-0067">ATP-binding</keyword>
<keyword id="KW-1003">Cell membrane</keyword>
<keyword id="KW-0472">Membrane</keyword>
<keyword id="KW-0547">Nucleotide-binding</keyword>
<keyword id="KW-1278">Translocase</keyword>
<keyword id="KW-0813">Transport</keyword>
<accession>Q927N9</accession>
<sequence length="288" mass="31882">MEIKLEQLGYCYQKNSPFEKRALLDVNVSFDSGSYSAIIGHTGSGKSTLLQHLNALLMPTEGKITVGDREIVAGVKQKKLRDLRKKVGIVFQFPEAQLFEETVEKDICFGPMNFGVSEEDAKLRAKKVIYEVGLTEEILSRSPFELSGGQMRRVAIAGVLAMDPEVLVLDEPTAGLDPHGREEIMEMFYNLHKEKGLTTVLVTHSMEDAARYAEKIVLMKAGTVLKIGSPREIFAKPDELVDLGLSVPDVVRFQGLFERKFNVKLTKTCLTIAELTAEMAPYLAKGGA</sequence>
<comment type="function">
    <text evidence="1">ATP-binding (A) component of a common energy-coupling factor (ECF) ABC-transporter complex. Unlike classic ABC transporters this ECF transporter provides the energy necessary to transport a number of different substrates.</text>
</comment>
<comment type="subunit">
    <text evidence="1">Forms a stable energy-coupling factor (ECF) transporter complex composed of 2 membrane-embedded substrate-binding proteins (S component), 2 ATP-binding proteins (A component) and 2 transmembrane proteins (T component).</text>
</comment>
<comment type="subcellular location">
    <subcellularLocation>
        <location evidence="1">Cell membrane</location>
        <topology evidence="1">Peripheral membrane protein</topology>
    </subcellularLocation>
</comment>
<comment type="similarity">
    <text evidence="1">Belongs to the ABC transporter superfamily. Energy-coupling factor EcfA family.</text>
</comment>
<name>ECFA2_LISIN</name>
<gene>
    <name evidence="1" type="primary">ecfA2</name>
    <name type="synonym">cbiO2</name>
    <name type="ordered locus">lin2749</name>
</gene>
<proteinExistence type="inferred from homology"/>
<evidence type="ECO:0000255" key="1">
    <source>
        <dbReference type="HAMAP-Rule" id="MF_01710"/>
    </source>
</evidence>
<protein>
    <recommendedName>
        <fullName evidence="1">Energy-coupling factor transporter ATP-binding protein EcfA2</fullName>
        <shortName evidence="1">ECF transporter A component EcfA2</shortName>
        <ecNumber evidence="1">7.-.-.-</ecNumber>
    </recommendedName>
</protein>